<name>FLID_SALTY</name>
<sequence length="467" mass="49835">MASISSLGVGSNLPLDQLLTDLTKNEKGRLTPITKQQSANSAKLTAYGTLKSALEKFQTANTALNKADLFKSTVASSTTEDLKVSTTAGAAAGTYKINVTQLAAAQSLATKTTFATTKEQLGDTSVTSRTIKIEQPGRKEPLEIKLDKGDTSMEAIRDAINDADSGIAASIVKVKENEFQLVLTANSGTDNTMKITVEGDTKLNDLLAYDSTTNTGNMQELVKAENAKLNVNGIDIERQSNTVTDAPQGITLTLTKKVTDATVTVTKDDTKAKEAIKSWVDAYNSLVDTFSSLTKYTAVEPGEEASDKNGALLGDSVVRTIQTGIRAQFANSGSNSAFKTMAEIGITQDGTSGKLKIDDDKLTKVLKDNTAAARELLVGDGKETGITTKIATEVKSYLADDGIIDNAQDNVNATLKSLTKQYLSVSNSIDETVARYKAQFTQLDTMMSKLNNTSSYLTQQFTAMNKS</sequence>
<protein>
    <recommendedName>
        <fullName>Flagellar hook-associated protein 2</fullName>
        <shortName>HAP2</shortName>
    </recommendedName>
    <alternativeName>
        <fullName>Filament cap protein</fullName>
    </alternativeName>
    <alternativeName>
        <fullName>Flagellar cap protein</fullName>
    </alternativeName>
</protein>
<reference key="1">
    <citation type="journal article" date="1990" name="J. Mol. Biol.">
        <title>Flagellar hook and hook-associated proteins of Salmonella typhimurium and their relationship to other axial components of the flagellum.</title>
        <authorList>
            <person name="Homma M."/>
            <person name="Derosier D.J."/>
            <person name="Macnab R.M."/>
        </authorList>
    </citation>
    <scope>NUCLEOTIDE SEQUENCE [GENOMIC DNA]</scope>
</reference>
<reference key="2">
    <citation type="journal article" date="2001" name="Nature">
        <title>Complete genome sequence of Salmonella enterica serovar Typhimurium LT2.</title>
        <authorList>
            <person name="McClelland M."/>
            <person name="Sanderson K.E."/>
            <person name="Spieth J."/>
            <person name="Clifton S.W."/>
            <person name="Latreille P."/>
            <person name="Courtney L."/>
            <person name="Porwollik S."/>
            <person name="Ali J."/>
            <person name="Dante M."/>
            <person name="Du F."/>
            <person name="Hou S."/>
            <person name="Layman D."/>
            <person name="Leonard S."/>
            <person name="Nguyen C."/>
            <person name="Scott K."/>
            <person name="Holmes A."/>
            <person name="Grewal N."/>
            <person name="Mulvaney E."/>
            <person name="Ryan E."/>
            <person name="Sun H."/>
            <person name="Florea L."/>
            <person name="Miller W."/>
            <person name="Stoneking T."/>
            <person name="Nhan M."/>
            <person name="Waterston R."/>
            <person name="Wilson R.K."/>
        </authorList>
    </citation>
    <scope>NUCLEOTIDE SEQUENCE [LARGE SCALE GENOMIC DNA]</scope>
    <source>
        <strain>LT2 / SGSC1412 / ATCC 700720</strain>
    </source>
</reference>
<reference key="3">
    <citation type="journal article" date="1992" name="J. Gen. Microbiol.">
        <title>Subdivision of flagellar region III of the Escherichia coli and Salmonella typhimurium chromosomes and identification of two additional flagellar genes.</title>
        <authorList>
            <person name="Kawagishi I."/>
            <person name="Mueller V."/>
            <person name="Williams A.W."/>
            <person name="Irikura V.M."/>
            <person name="Macnab R.M."/>
        </authorList>
    </citation>
    <scope>NUCLEOTIDE SEQUENCE [GENOMIC DNA] OF 441-467</scope>
    <source>
        <strain>SJW1103</strain>
    </source>
</reference>
<reference key="4">
    <citation type="journal article" date="1998" name="J. Mol. Biol.">
        <title>Mechanism of self-association and filament capping by flagellar HAP2.</title>
        <authorList>
            <person name="Vonderviszt F."/>
            <person name="Imada K."/>
            <person name="Furukawa Y."/>
            <person name="Uedaira H."/>
            <person name="Taniguchi H."/>
            <person name="Namba K."/>
        </authorList>
    </citation>
    <scope>SUBUNIT</scope>
</reference>
<reference key="5">
    <citation type="journal article" date="2000" name="Science">
        <title>The bacterial flagellar cap as the rotary promoter of flagellin self-assembly.</title>
        <authorList>
            <person name="Yonekura K."/>
            <person name="Maki S."/>
            <person name="Morgan D.G."/>
            <person name="DeRosier D.J."/>
            <person name="Vonderviszt F."/>
            <person name="Imada K."/>
            <person name="Namba K."/>
        </authorList>
    </citation>
    <scope>SUBUNIT</scope>
</reference>
<keyword id="KW-0002">3D-structure</keyword>
<keyword id="KW-0975">Bacterial flagellum</keyword>
<keyword id="KW-0175">Coiled coil</keyword>
<keyword id="KW-1185">Reference proteome</keyword>
<keyword id="KW-0964">Secreted</keyword>
<accession>P16328</accession>
<evidence type="ECO:0000255" key="1"/>
<evidence type="ECO:0000269" key="2">
    <source>
    </source>
</evidence>
<evidence type="ECO:0000269" key="3">
    <source>
    </source>
</evidence>
<evidence type="ECO:0000305" key="4"/>
<evidence type="ECO:0007829" key="5">
    <source>
        <dbReference type="PDB" id="5GNA"/>
    </source>
</evidence>
<evidence type="ECO:0007829" key="6">
    <source>
        <dbReference type="PDB" id="5H5T"/>
    </source>
</evidence>
<organism>
    <name type="scientific">Salmonella typhimurium (strain LT2 / SGSC1412 / ATCC 700720)</name>
    <dbReference type="NCBI Taxonomy" id="99287"/>
    <lineage>
        <taxon>Bacteria</taxon>
        <taxon>Pseudomonadati</taxon>
        <taxon>Pseudomonadota</taxon>
        <taxon>Gammaproteobacteria</taxon>
        <taxon>Enterobacterales</taxon>
        <taxon>Enterobacteriaceae</taxon>
        <taxon>Salmonella</taxon>
    </lineage>
</organism>
<gene>
    <name type="primary">fliD</name>
    <name type="synonym">flaV</name>
    <name type="synonym">flbC</name>
    <name type="ordered locus">STM1960</name>
</gene>
<feature type="initiator methionine" description="Removed">
    <location>
        <position position="1"/>
    </location>
</feature>
<feature type="chain" id="PRO_0000177024" description="Flagellar hook-associated protein 2">
    <location>
        <begin position="2"/>
        <end position="467"/>
    </location>
</feature>
<feature type="coiled-coil region" evidence="1">
    <location>
        <begin position="411"/>
        <end position="439"/>
    </location>
</feature>
<feature type="strand" evidence="6">
    <location>
        <begin position="74"/>
        <end position="78"/>
    </location>
</feature>
<feature type="strand" evidence="6">
    <location>
        <begin position="82"/>
        <end position="86"/>
    </location>
</feature>
<feature type="strand" evidence="6">
    <location>
        <begin position="93"/>
        <end position="101"/>
    </location>
</feature>
<feature type="strand" evidence="6">
    <location>
        <begin position="104"/>
        <end position="112"/>
    </location>
</feature>
<feature type="strand" evidence="6">
    <location>
        <begin position="117"/>
        <end position="120"/>
    </location>
</feature>
<feature type="strand" evidence="6">
    <location>
        <begin position="129"/>
        <end position="134"/>
    </location>
</feature>
<feature type="strand" evidence="6">
    <location>
        <begin position="142"/>
        <end position="146"/>
    </location>
</feature>
<feature type="helix" evidence="6">
    <location>
        <begin position="153"/>
        <end position="162"/>
    </location>
</feature>
<feature type="strand" evidence="6">
    <location>
        <begin position="165"/>
        <end position="175"/>
    </location>
</feature>
<feature type="strand" evidence="6">
    <location>
        <begin position="178"/>
        <end position="188"/>
    </location>
</feature>
<feature type="helix" evidence="6">
    <location>
        <begin position="189"/>
        <end position="191"/>
    </location>
</feature>
<feature type="strand" evidence="6">
    <location>
        <begin position="194"/>
        <end position="199"/>
    </location>
</feature>
<feature type="helix" evidence="6">
    <location>
        <begin position="201"/>
        <end position="207"/>
    </location>
</feature>
<feature type="turn" evidence="6">
    <location>
        <begin position="211"/>
        <end position="214"/>
    </location>
</feature>
<feature type="strand" evidence="6">
    <location>
        <begin position="215"/>
        <end position="222"/>
    </location>
</feature>
<feature type="strand" evidence="6">
    <location>
        <begin position="227"/>
        <end position="231"/>
    </location>
</feature>
<feature type="strand" evidence="6">
    <location>
        <begin position="234"/>
        <end position="243"/>
    </location>
</feature>
<feature type="turn" evidence="6">
    <location>
        <begin position="246"/>
        <end position="249"/>
    </location>
</feature>
<feature type="strand" evidence="6">
    <location>
        <begin position="250"/>
        <end position="254"/>
    </location>
</feature>
<feature type="strand" evidence="6">
    <location>
        <begin position="258"/>
        <end position="266"/>
    </location>
</feature>
<feature type="helix" evidence="5">
    <location>
        <begin position="415"/>
        <end position="465"/>
    </location>
</feature>
<dbReference type="EMBL" id="X51740">
    <property type="protein sequence ID" value="CAA36030.1"/>
    <property type="molecule type" value="Genomic_DNA"/>
</dbReference>
<dbReference type="EMBL" id="AE006468">
    <property type="protein sequence ID" value="AAL20872.1"/>
    <property type="molecule type" value="Genomic_DNA"/>
</dbReference>
<dbReference type="EMBL" id="M85241">
    <property type="protein sequence ID" value="AAA27076.1"/>
    <property type="molecule type" value="Genomic_DNA"/>
</dbReference>
<dbReference type="PIR" id="S10364">
    <property type="entry name" value="S10364"/>
</dbReference>
<dbReference type="RefSeq" id="NP_460913.1">
    <property type="nucleotide sequence ID" value="NC_003197.2"/>
</dbReference>
<dbReference type="RefSeq" id="WP_000146802.1">
    <property type="nucleotide sequence ID" value="NC_003197.2"/>
</dbReference>
<dbReference type="PDB" id="5GNA">
    <property type="method" value="X-ray"/>
    <property type="resolution" value="2.30 A"/>
    <property type="chains" value="B=401-467"/>
</dbReference>
<dbReference type="PDB" id="5H5T">
    <property type="method" value="X-ray"/>
    <property type="resolution" value="2.50 A"/>
    <property type="chains" value="A/B/C/D/E=71-268"/>
</dbReference>
<dbReference type="PDB" id="5KRW">
    <property type="method" value="NMR"/>
    <property type="chains" value="A=428-467"/>
</dbReference>
<dbReference type="PDB" id="6CH2">
    <property type="method" value="X-ray"/>
    <property type="resolution" value="2.70 A"/>
    <property type="chains" value="D/E/F=428-467"/>
</dbReference>
<dbReference type="PDBsum" id="5GNA"/>
<dbReference type="PDBsum" id="5H5T"/>
<dbReference type="PDBsum" id="5KRW"/>
<dbReference type="PDBsum" id="6CH2"/>
<dbReference type="SMR" id="P16328"/>
<dbReference type="DIP" id="DIP-60505N"/>
<dbReference type="IntAct" id="P16328">
    <property type="interactions" value="1"/>
</dbReference>
<dbReference type="STRING" id="99287.STM1960"/>
<dbReference type="PaxDb" id="99287-STM1960"/>
<dbReference type="GeneID" id="1253481"/>
<dbReference type="KEGG" id="stm:STM1960"/>
<dbReference type="PATRIC" id="fig|99287.12.peg.2076"/>
<dbReference type="HOGENOM" id="CLU_015182_8_1_6"/>
<dbReference type="OMA" id="GGRQQIW"/>
<dbReference type="PhylomeDB" id="P16328"/>
<dbReference type="BioCyc" id="SENT99287:STM1960-MONOMER"/>
<dbReference type="Proteomes" id="UP000001014">
    <property type="component" value="Chromosome"/>
</dbReference>
<dbReference type="GO" id="GO:0009421">
    <property type="term" value="C:bacterial-type flagellum filament cap"/>
    <property type="evidence" value="ECO:0000318"/>
    <property type="project" value="GO_Central"/>
</dbReference>
<dbReference type="GO" id="GO:0009424">
    <property type="term" value="C:bacterial-type flagellum hook"/>
    <property type="evidence" value="ECO:0007669"/>
    <property type="project" value="InterPro"/>
</dbReference>
<dbReference type="GO" id="GO:0005576">
    <property type="term" value="C:extracellular region"/>
    <property type="evidence" value="ECO:0007669"/>
    <property type="project" value="UniProtKB-SubCell"/>
</dbReference>
<dbReference type="GO" id="GO:0071973">
    <property type="term" value="P:bacterial-type flagellum-dependent cell motility"/>
    <property type="evidence" value="ECO:0000318"/>
    <property type="project" value="GO_Central"/>
</dbReference>
<dbReference type="GO" id="GO:0007155">
    <property type="term" value="P:cell adhesion"/>
    <property type="evidence" value="ECO:0007669"/>
    <property type="project" value="InterPro"/>
</dbReference>
<dbReference type="InterPro" id="IPR010810">
    <property type="entry name" value="Flagellin_hook_IN_motif"/>
</dbReference>
<dbReference type="InterPro" id="IPR040026">
    <property type="entry name" value="FliD"/>
</dbReference>
<dbReference type="InterPro" id="IPR010809">
    <property type="entry name" value="FliD_C"/>
</dbReference>
<dbReference type="InterPro" id="IPR003481">
    <property type="entry name" value="FliD_N"/>
</dbReference>
<dbReference type="NCBIfam" id="NF005955">
    <property type="entry name" value="PRK08032.1"/>
    <property type="match status" value="1"/>
</dbReference>
<dbReference type="PANTHER" id="PTHR30288">
    <property type="entry name" value="FLAGELLAR CAP/ASSEMBLY PROTEIN FLID"/>
    <property type="match status" value="1"/>
</dbReference>
<dbReference type="PANTHER" id="PTHR30288:SF0">
    <property type="entry name" value="FLAGELLAR HOOK-ASSOCIATED PROTEIN 2"/>
    <property type="match status" value="1"/>
</dbReference>
<dbReference type="Pfam" id="PF07196">
    <property type="entry name" value="Flagellin_IN"/>
    <property type="match status" value="1"/>
</dbReference>
<dbReference type="Pfam" id="PF07195">
    <property type="entry name" value="FliD_C"/>
    <property type="match status" value="1"/>
</dbReference>
<dbReference type="Pfam" id="PF02465">
    <property type="entry name" value="FliD_N"/>
    <property type="match status" value="1"/>
</dbReference>
<comment type="function">
    <text>Required for the morphogenesis and for the elongation of the flagellar filament by facilitating polymerization of the flagellin monomers at the tip of growing filament. Forms a capping structure, which prevents flagellin subunits (transported through the central channel of the flagellum) from leaking out without polymerization at the distal end.</text>
</comment>
<comment type="subunit">
    <text evidence="2 3">Homopentamer.</text>
</comment>
<comment type="interaction">
    <interactant intactId="EBI-15850928">
        <id>P16328</id>
    </interactant>
    <interactant intactId="EBI-15610664">
        <id>P0A1N2</id>
        <label>fliT</label>
    </interactant>
    <organismsDiffer>false</organismsDiffer>
    <experiments>4</experiments>
</comment>
<comment type="subcellular location">
    <subcellularLocation>
        <location>Secreted</location>
    </subcellularLocation>
    <subcellularLocation>
        <location>Bacterial flagellum</location>
    </subcellularLocation>
</comment>
<comment type="similarity">
    <text evidence="4">Belongs to the FliD family.</text>
</comment>
<proteinExistence type="evidence at protein level"/>